<feature type="chain" id="PRO_1000091314" description="Leucine--tRNA ligase">
    <location>
        <begin position="1"/>
        <end position="860"/>
    </location>
</feature>
<feature type="short sequence motif" description="'HIGH' region">
    <location>
        <begin position="42"/>
        <end position="52"/>
    </location>
</feature>
<feature type="short sequence motif" description="'KMSKS' region">
    <location>
        <begin position="619"/>
        <end position="623"/>
    </location>
</feature>
<feature type="binding site" evidence="1">
    <location>
        <position position="622"/>
    </location>
    <ligand>
        <name>ATP</name>
        <dbReference type="ChEBI" id="CHEBI:30616"/>
    </ligand>
</feature>
<organism>
    <name type="scientific">Escherichia coli O157:H7 (strain EC4115 / EHEC)</name>
    <dbReference type="NCBI Taxonomy" id="444450"/>
    <lineage>
        <taxon>Bacteria</taxon>
        <taxon>Pseudomonadati</taxon>
        <taxon>Pseudomonadota</taxon>
        <taxon>Gammaproteobacteria</taxon>
        <taxon>Enterobacterales</taxon>
        <taxon>Enterobacteriaceae</taxon>
        <taxon>Escherichia</taxon>
    </lineage>
</organism>
<reference key="1">
    <citation type="journal article" date="2011" name="Proc. Natl. Acad. Sci. U.S.A.">
        <title>Genomic anatomy of Escherichia coli O157:H7 outbreaks.</title>
        <authorList>
            <person name="Eppinger M."/>
            <person name="Mammel M.K."/>
            <person name="Leclerc J.E."/>
            <person name="Ravel J."/>
            <person name="Cebula T.A."/>
        </authorList>
    </citation>
    <scope>NUCLEOTIDE SEQUENCE [LARGE SCALE GENOMIC DNA]</scope>
    <source>
        <strain>EC4115 / EHEC</strain>
    </source>
</reference>
<accession>B5YQJ4</accession>
<proteinExistence type="inferred from homology"/>
<keyword id="KW-0030">Aminoacyl-tRNA synthetase</keyword>
<keyword id="KW-0067">ATP-binding</keyword>
<keyword id="KW-0963">Cytoplasm</keyword>
<keyword id="KW-0436">Ligase</keyword>
<keyword id="KW-0547">Nucleotide-binding</keyword>
<keyword id="KW-0648">Protein biosynthesis</keyword>
<sequence length="860" mass="97234">MQEQYRPEEIESKVQLHWDEKRTFEVTEDESKEKYYCLSMLPYPSGRLHMGHVRNYTIGDVIARYQRMLGKNVLQPIGWDAFGLPAEGAAVKNNTAPAPWTYDNIAYMKNQLKMLGFGYDWSRELATCTPEYYRWEQKFFTELYKKGLVYKKTSAVNWCPNDQTVLANEQVIDGCCWRCDTKVERKEIPQWFIKITAYADELLNDLDKLDHWPDTVKTMQRNWIGRSEGVEITFNVNDYDNTLTVYTTRPDTFMGCTYLAVAAGHPLAQKAAENNPELAAFIDECRNTKVAEAEMATMEKKGVNTGFKAVHPLTGEEIPVWAANFVLMEYGTGAVMAVPGHDQRDYEFASKYGLNIKPVILAADGSEPDLSQQALTEKGVLFNSGEFNGLDHEAAFNAIADKLTAMGVGERKVNYRLRDWGVSRQRYWGAPIPMVTLEDGTVMPTPDDQLPVILPEDVVMDGITSPIKADPQWAKTTVNGMPALRETDTFDTFMESSWYYARYTCPEYKEGMLDSEAANYWLPVDIYIGGIEHAIMHLLYFRFFHKLMRDAGMVNSDEPAKQLLCQGMVLADAFYYVGENGERNWVSPVDAIVERDEKGRIVKAKDAAGHELVYTGMSKMSKSKNNGIDPQVMVERYGADTVRLFMMFASPADMTLEWQESGVEGANRFLKRVWKLVYEHTAKGDVAALNVDALTEDQKALRRDVHKTIAKVTDDIGRRQTFNTAIAAIMELMNKLAKAPTDGEQDRALMQEALLAVVRMLNPFTPHICFTLWQELKGEGDIDNAPWPVADEKAMVEDSTLVVVQVNGKVRAKITVPVDATEEQVRERAGQEHLVAKYLDGVTVRKVIYVPGKLLNLVVG</sequence>
<name>SYL_ECO5E</name>
<dbReference type="EC" id="6.1.1.4" evidence="1"/>
<dbReference type="EMBL" id="CP001164">
    <property type="protein sequence ID" value="ACI35040.1"/>
    <property type="molecule type" value="Genomic_DNA"/>
</dbReference>
<dbReference type="RefSeq" id="WP_001301620.1">
    <property type="nucleotide sequence ID" value="NC_011353.1"/>
</dbReference>
<dbReference type="SMR" id="B5YQJ4"/>
<dbReference type="KEGG" id="ecf:ECH74115_0731"/>
<dbReference type="HOGENOM" id="CLU_004427_0_0_6"/>
<dbReference type="GO" id="GO:0005829">
    <property type="term" value="C:cytosol"/>
    <property type="evidence" value="ECO:0007669"/>
    <property type="project" value="TreeGrafter"/>
</dbReference>
<dbReference type="GO" id="GO:0002161">
    <property type="term" value="F:aminoacyl-tRNA deacylase activity"/>
    <property type="evidence" value="ECO:0007669"/>
    <property type="project" value="InterPro"/>
</dbReference>
<dbReference type="GO" id="GO:0005524">
    <property type="term" value="F:ATP binding"/>
    <property type="evidence" value="ECO:0007669"/>
    <property type="project" value="UniProtKB-UniRule"/>
</dbReference>
<dbReference type="GO" id="GO:0004823">
    <property type="term" value="F:leucine-tRNA ligase activity"/>
    <property type="evidence" value="ECO:0007669"/>
    <property type="project" value="UniProtKB-UniRule"/>
</dbReference>
<dbReference type="GO" id="GO:0006429">
    <property type="term" value="P:leucyl-tRNA aminoacylation"/>
    <property type="evidence" value="ECO:0007669"/>
    <property type="project" value="UniProtKB-UniRule"/>
</dbReference>
<dbReference type="CDD" id="cd07958">
    <property type="entry name" value="Anticodon_Ia_Leu_BEm"/>
    <property type="match status" value="1"/>
</dbReference>
<dbReference type="CDD" id="cd00812">
    <property type="entry name" value="LeuRS_core"/>
    <property type="match status" value="1"/>
</dbReference>
<dbReference type="FunFam" id="1.10.730.10:FF:000002">
    <property type="entry name" value="Leucine--tRNA ligase"/>
    <property type="match status" value="2"/>
</dbReference>
<dbReference type="FunFam" id="2.20.28.290:FF:000001">
    <property type="entry name" value="Leucine--tRNA ligase"/>
    <property type="match status" value="1"/>
</dbReference>
<dbReference type="FunFam" id="3.10.20.590:FF:000001">
    <property type="entry name" value="Leucine--tRNA ligase"/>
    <property type="match status" value="1"/>
</dbReference>
<dbReference type="FunFam" id="3.40.50.620:FF:000003">
    <property type="entry name" value="Leucine--tRNA ligase"/>
    <property type="match status" value="1"/>
</dbReference>
<dbReference type="FunFam" id="3.40.50.620:FF:000124">
    <property type="entry name" value="Leucine--tRNA ligase"/>
    <property type="match status" value="1"/>
</dbReference>
<dbReference type="FunFam" id="3.90.740.10:FF:000012">
    <property type="entry name" value="Leucine--tRNA ligase"/>
    <property type="match status" value="1"/>
</dbReference>
<dbReference type="Gene3D" id="2.20.28.290">
    <property type="match status" value="1"/>
</dbReference>
<dbReference type="Gene3D" id="3.10.20.590">
    <property type="match status" value="1"/>
</dbReference>
<dbReference type="Gene3D" id="3.40.50.620">
    <property type="entry name" value="HUPs"/>
    <property type="match status" value="2"/>
</dbReference>
<dbReference type="Gene3D" id="1.10.730.10">
    <property type="entry name" value="Isoleucyl-tRNA Synthetase, Domain 1"/>
    <property type="match status" value="2"/>
</dbReference>
<dbReference type="HAMAP" id="MF_00049_B">
    <property type="entry name" value="Leu_tRNA_synth_B"/>
    <property type="match status" value="1"/>
</dbReference>
<dbReference type="InterPro" id="IPR001412">
    <property type="entry name" value="aa-tRNA-synth_I_CS"/>
</dbReference>
<dbReference type="InterPro" id="IPR002300">
    <property type="entry name" value="aa-tRNA-synth_Ia"/>
</dbReference>
<dbReference type="InterPro" id="IPR002302">
    <property type="entry name" value="Leu-tRNA-ligase"/>
</dbReference>
<dbReference type="InterPro" id="IPR025709">
    <property type="entry name" value="Leu_tRNA-synth_edit"/>
</dbReference>
<dbReference type="InterPro" id="IPR013155">
    <property type="entry name" value="M/V/L/I-tRNA-synth_anticd-bd"/>
</dbReference>
<dbReference type="InterPro" id="IPR015413">
    <property type="entry name" value="Methionyl/Leucyl_tRNA_Synth"/>
</dbReference>
<dbReference type="InterPro" id="IPR014729">
    <property type="entry name" value="Rossmann-like_a/b/a_fold"/>
</dbReference>
<dbReference type="InterPro" id="IPR009080">
    <property type="entry name" value="tRNAsynth_Ia_anticodon-bd"/>
</dbReference>
<dbReference type="InterPro" id="IPR009008">
    <property type="entry name" value="Val/Leu/Ile-tRNA-synth_edit"/>
</dbReference>
<dbReference type="NCBIfam" id="TIGR00396">
    <property type="entry name" value="leuS_bact"/>
    <property type="match status" value="1"/>
</dbReference>
<dbReference type="PANTHER" id="PTHR43740:SF2">
    <property type="entry name" value="LEUCINE--TRNA LIGASE, MITOCHONDRIAL"/>
    <property type="match status" value="1"/>
</dbReference>
<dbReference type="PANTHER" id="PTHR43740">
    <property type="entry name" value="LEUCYL-TRNA SYNTHETASE"/>
    <property type="match status" value="1"/>
</dbReference>
<dbReference type="Pfam" id="PF08264">
    <property type="entry name" value="Anticodon_1"/>
    <property type="match status" value="1"/>
</dbReference>
<dbReference type="Pfam" id="PF00133">
    <property type="entry name" value="tRNA-synt_1"/>
    <property type="match status" value="2"/>
</dbReference>
<dbReference type="Pfam" id="PF13603">
    <property type="entry name" value="tRNA-synt_1_2"/>
    <property type="match status" value="1"/>
</dbReference>
<dbReference type="Pfam" id="PF09334">
    <property type="entry name" value="tRNA-synt_1g"/>
    <property type="match status" value="1"/>
</dbReference>
<dbReference type="PRINTS" id="PR00985">
    <property type="entry name" value="TRNASYNTHLEU"/>
</dbReference>
<dbReference type="SUPFAM" id="SSF47323">
    <property type="entry name" value="Anticodon-binding domain of a subclass of class I aminoacyl-tRNA synthetases"/>
    <property type="match status" value="1"/>
</dbReference>
<dbReference type="SUPFAM" id="SSF52374">
    <property type="entry name" value="Nucleotidylyl transferase"/>
    <property type="match status" value="1"/>
</dbReference>
<dbReference type="SUPFAM" id="SSF50677">
    <property type="entry name" value="ValRS/IleRS/LeuRS editing domain"/>
    <property type="match status" value="1"/>
</dbReference>
<dbReference type="PROSITE" id="PS00178">
    <property type="entry name" value="AA_TRNA_LIGASE_I"/>
    <property type="match status" value="1"/>
</dbReference>
<comment type="catalytic activity">
    <reaction evidence="1">
        <text>tRNA(Leu) + L-leucine + ATP = L-leucyl-tRNA(Leu) + AMP + diphosphate</text>
        <dbReference type="Rhea" id="RHEA:11688"/>
        <dbReference type="Rhea" id="RHEA-COMP:9613"/>
        <dbReference type="Rhea" id="RHEA-COMP:9622"/>
        <dbReference type="ChEBI" id="CHEBI:30616"/>
        <dbReference type="ChEBI" id="CHEBI:33019"/>
        <dbReference type="ChEBI" id="CHEBI:57427"/>
        <dbReference type="ChEBI" id="CHEBI:78442"/>
        <dbReference type="ChEBI" id="CHEBI:78494"/>
        <dbReference type="ChEBI" id="CHEBI:456215"/>
        <dbReference type="EC" id="6.1.1.4"/>
    </reaction>
</comment>
<comment type="subcellular location">
    <subcellularLocation>
        <location evidence="1">Cytoplasm</location>
    </subcellularLocation>
</comment>
<comment type="similarity">
    <text evidence="1">Belongs to the class-I aminoacyl-tRNA synthetase family.</text>
</comment>
<gene>
    <name evidence="1" type="primary">leuS</name>
    <name type="ordered locus">ECH74115_0731</name>
</gene>
<protein>
    <recommendedName>
        <fullName evidence="1">Leucine--tRNA ligase</fullName>
        <ecNumber evidence="1">6.1.1.4</ecNumber>
    </recommendedName>
    <alternativeName>
        <fullName evidence="1">Leucyl-tRNA synthetase</fullName>
        <shortName evidence="1">LeuRS</shortName>
    </alternativeName>
</protein>
<evidence type="ECO:0000255" key="1">
    <source>
        <dbReference type="HAMAP-Rule" id="MF_00049"/>
    </source>
</evidence>